<reference key="1">
    <citation type="journal article" date="1984" name="Nature">
        <title>DNA sequence and expression of the B95-8 Epstein-Barr virus genome.</title>
        <authorList>
            <person name="Baer R."/>
            <person name="Bankier A.T."/>
            <person name="Biggin M.D."/>
            <person name="Deininger P.L."/>
            <person name="Farrell P.J."/>
            <person name="Gibson T.J."/>
            <person name="Hatfull G."/>
            <person name="Hudson G.S."/>
            <person name="Satchwell S.C."/>
            <person name="Seguin C."/>
            <person name="Tuffnell P.S."/>
            <person name="Barrell B.G."/>
        </authorList>
    </citation>
    <scope>NUCLEOTIDE SEQUENCE [LARGE SCALE GENOMIC DNA]</scope>
</reference>
<reference key="2">
    <citation type="journal article" date="1985" name="Virology">
        <title>The BamHI F region of the B95-8 Epstein-Barr virus genome.</title>
        <authorList>
            <person name="Hudson G.S."/>
            <person name="Gibson T.J."/>
            <person name="Barrell B.G."/>
        </authorList>
    </citation>
    <scope>NUCLEOTIDE SEQUENCE [GENOMIC DNA]</scope>
</reference>
<reference key="3">
    <citation type="journal article" date="2003" name="Virology">
        <title>Updated Epstein-Barr virus (EBV) DNA sequence and analysis of a promoter for the BART (CST, BARF0) RNAs of EBV.</title>
        <authorList>
            <person name="de Jesus O."/>
            <person name="Smith P.R."/>
            <person name="Spender L.C."/>
            <person name="Elgueta Karstegl C."/>
            <person name="Niller H.H."/>
            <person name="Huang D."/>
            <person name="Farrell P.J."/>
        </authorList>
    </citation>
    <scope>GENOME REANNOTATION</scope>
</reference>
<reference key="4">
    <citation type="journal article" date="2013" name="J. Virol.">
        <title>An Epstein-Barr virus mutant produces immunogenic defective particles devoid of viral DNA.</title>
        <authorList>
            <person name="Pavlova S."/>
            <person name="Feederle R."/>
            <person name="Gaertner K."/>
            <person name="Fuchs W."/>
            <person name="Granzow H."/>
            <person name="Delecluse H.J."/>
        </authorList>
    </citation>
    <scope>FUNCTION</scope>
</reference>
<name>UL32_EBVB9</name>
<organism>
    <name type="scientific">Epstein-Barr virus (strain B95-8)</name>
    <name type="common">HHV-4</name>
    <name type="synonym">Human herpesvirus 4</name>
    <dbReference type="NCBI Taxonomy" id="10377"/>
    <lineage>
        <taxon>Viruses</taxon>
        <taxon>Duplodnaviria</taxon>
        <taxon>Heunggongvirae</taxon>
        <taxon>Peploviricota</taxon>
        <taxon>Herviviricetes</taxon>
        <taxon>Herpesvirales</taxon>
        <taxon>Orthoherpesviridae</taxon>
        <taxon>Gammaherpesvirinae</taxon>
        <taxon>Lymphocryptovirus</taxon>
        <taxon>Lymphocryptovirus humangamma4</taxon>
        <taxon>Epstein-Barr virus (strain GD1)</taxon>
    </lineage>
</organism>
<organismHost>
    <name type="scientific">Homo sapiens</name>
    <name type="common">Human</name>
    <dbReference type="NCBI Taxonomy" id="9606"/>
</organismHost>
<accession>P03184</accession>
<accession>Q777G8</accession>
<comment type="function">
    <text evidence="5">Plays a role in efficient localization of neo-synthesized capsids to nuclear replication compartments, thereby controlling cleavage and packaging of virus genomic DNA.</text>
</comment>
<comment type="subcellular location">
    <subcellularLocation>
        <location evidence="1">Host cytoplasm</location>
    </subcellularLocation>
    <subcellularLocation>
        <location evidence="1">Host nucleus</location>
    </subcellularLocation>
    <text>Mainly cytoplasmic in transfected cell culture.</text>
</comment>
<comment type="similarity">
    <text evidence="4">Belongs to the herpesviridae UL32 protein family.</text>
</comment>
<comment type="caution">
    <text evidence="4">Was originally thought to be an envelope glycoprotein.</text>
</comment>
<evidence type="ECO:0000250" key="1">
    <source>
        <dbReference type="UniProtKB" id="P10216"/>
    </source>
</evidence>
<evidence type="ECO:0000255" key="2">
    <source>
        <dbReference type="PROSITE-ProRule" id="PRU01332"/>
    </source>
</evidence>
<evidence type="ECO:0000256" key="3">
    <source>
        <dbReference type="SAM" id="MobiDB-lite"/>
    </source>
</evidence>
<evidence type="ECO:0000305" key="4"/>
<evidence type="ECO:0000305" key="5">
    <source>
    </source>
</evidence>
<dbReference type="EMBL" id="V01555">
    <property type="protein sequence ID" value="CAA24878.1"/>
    <property type="molecule type" value="Genomic_DNA"/>
</dbReference>
<dbReference type="EMBL" id="M11923">
    <property type="protein sequence ID" value="AAA45867.1"/>
    <property type="molecule type" value="Genomic_DNA"/>
</dbReference>
<dbReference type="EMBL" id="AJ507799">
    <property type="protein sequence ID" value="CAD53398.1"/>
    <property type="molecule type" value="Genomic_DNA"/>
</dbReference>
<dbReference type="PIR" id="E93065">
    <property type="entry name" value="QQBE6"/>
</dbReference>
<dbReference type="RefSeq" id="YP_401648.1">
    <property type="nucleotide sequence ID" value="NC_007605.1"/>
</dbReference>
<dbReference type="PDB" id="6XFA">
    <property type="method" value="EM"/>
    <property type="resolution" value="3.60 A"/>
    <property type="chains" value="A/B/C/D/E/F/G/H/I/J=42-525"/>
</dbReference>
<dbReference type="PDBsum" id="6XFA"/>
<dbReference type="SMR" id="P03184"/>
<dbReference type="DNASU" id="3783697"/>
<dbReference type="GeneID" id="3783697"/>
<dbReference type="KEGG" id="vg:3783697"/>
<dbReference type="Proteomes" id="UP000153037">
    <property type="component" value="Segment"/>
</dbReference>
<dbReference type="GO" id="GO:0030430">
    <property type="term" value="C:host cell cytoplasm"/>
    <property type="evidence" value="ECO:0007669"/>
    <property type="project" value="UniProtKB-SubCell"/>
</dbReference>
<dbReference type="GO" id="GO:0042025">
    <property type="term" value="C:host cell nucleus"/>
    <property type="evidence" value="ECO:0007669"/>
    <property type="project" value="UniProtKB-SubCell"/>
</dbReference>
<dbReference type="GO" id="GO:0019031">
    <property type="term" value="C:viral envelope"/>
    <property type="evidence" value="ECO:0007669"/>
    <property type="project" value="InterPro"/>
</dbReference>
<dbReference type="GO" id="GO:0008270">
    <property type="term" value="F:zinc ion binding"/>
    <property type="evidence" value="ECO:0007669"/>
    <property type="project" value="UniProtKB-KW"/>
</dbReference>
<dbReference type="InterPro" id="IPR002597">
    <property type="entry name" value="Herpes_env"/>
</dbReference>
<dbReference type="Pfam" id="PF01673">
    <property type="entry name" value="Herpes_env"/>
    <property type="match status" value="2"/>
</dbReference>
<dbReference type="PROSITE" id="PS51988">
    <property type="entry name" value="HERPESVIRUS_UL32"/>
    <property type="match status" value="1"/>
</dbReference>
<proteinExistence type="evidence at protein level"/>
<feature type="chain" id="PRO_0000116021" description="Packaging protein UL32 homolog">
    <location>
        <begin position="1"/>
        <end position="525"/>
    </location>
</feature>
<feature type="region of interest" description="Disordered" evidence="3">
    <location>
        <begin position="1"/>
        <end position="20"/>
    </location>
</feature>
<feature type="region of interest" description="Zinc finger 1" evidence="2">
    <location>
        <begin position="95"/>
        <end position="179"/>
    </location>
</feature>
<feature type="region of interest" description="Zinc finger 3" evidence="2">
    <location>
        <begin position="255"/>
        <end position="510"/>
    </location>
</feature>
<feature type="region of interest" description="Zinc finger 2" evidence="2">
    <location>
        <begin position="357"/>
        <end position="434"/>
    </location>
</feature>
<feature type="compositionally biased region" description="Polar residues" evidence="3">
    <location>
        <begin position="1"/>
        <end position="12"/>
    </location>
</feature>
<feature type="binding site" evidence="2">
    <location>
        <position position="95"/>
    </location>
    <ligand>
        <name>Zn(2+)</name>
        <dbReference type="ChEBI" id="CHEBI:29105"/>
        <label>1</label>
    </ligand>
</feature>
<feature type="binding site" evidence="2">
    <location>
        <position position="98"/>
    </location>
    <ligand>
        <name>Zn(2+)</name>
        <dbReference type="ChEBI" id="CHEBI:29105"/>
        <label>1</label>
    </ligand>
</feature>
<feature type="binding site" evidence="2">
    <location>
        <position position="173"/>
    </location>
    <ligand>
        <name>Zn(2+)</name>
        <dbReference type="ChEBI" id="CHEBI:29105"/>
        <label>1</label>
    </ligand>
</feature>
<feature type="binding site" evidence="2">
    <location>
        <position position="179"/>
    </location>
    <ligand>
        <name>Zn(2+)</name>
        <dbReference type="ChEBI" id="CHEBI:29105"/>
        <label>1</label>
    </ligand>
</feature>
<feature type="binding site" evidence="2">
    <location>
        <position position="255"/>
    </location>
    <ligand>
        <name>Zn(2+)</name>
        <dbReference type="ChEBI" id="CHEBI:29105"/>
        <label>3</label>
    </ligand>
</feature>
<feature type="binding site" evidence="2">
    <location>
        <position position="256"/>
    </location>
    <ligand>
        <name>Zn(2+)</name>
        <dbReference type="ChEBI" id="CHEBI:29105"/>
        <label>3</label>
    </ligand>
</feature>
<feature type="binding site" evidence="2">
    <location>
        <position position="357"/>
    </location>
    <ligand>
        <name>Zn(2+)</name>
        <dbReference type="ChEBI" id="CHEBI:29105"/>
        <label>2</label>
    </ligand>
</feature>
<feature type="binding site" evidence="2">
    <location>
        <position position="360"/>
    </location>
    <ligand>
        <name>Zn(2+)</name>
        <dbReference type="ChEBI" id="CHEBI:29105"/>
        <label>2</label>
    </ligand>
</feature>
<feature type="binding site" evidence="2">
    <location>
        <position position="427"/>
    </location>
    <ligand>
        <name>Zn(2+)</name>
        <dbReference type="ChEBI" id="CHEBI:29105"/>
        <label>2</label>
    </ligand>
</feature>
<feature type="binding site" evidence="2">
    <location>
        <position position="434"/>
    </location>
    <ligand>
        <name>Zn(2+)</name>
        <dbReference type="ChEBI" id="CHEBI:29105"/>
        <label>2</label>
    </ligand>
</feature>
<feature type="binding site" evidence="2">
    <location>
        <position position="473"/>
    </location>
    <ligand>
        <name>Zn(2+)</name>
        <dbReference type="ChEBI" id="CHEBI:29105"/>
        <label>3</label>
    </ligand>
</feature>
<feature type="binding site" evidence="2">
    <location>
        <position position="510"/>
    </location>
    <ligand>
        <name>Zn(2+)</name>
        <dbReference type="ChEBI" id="CHEBI:29105"/>
        <label>3</label>
    </ligand>
</feature>
<gene>
    <name type="ORF">BFLF1</name>
</gene>
<sequence length="525" mass="57912">MAHKVTSANEPNPLTGKRLSSCPLTRSGVTEVAQIAGRTPKMEDFVPWTVDNLKSQFEAVGLLMAHSYLPANAEEGIAYPPLVHTYESLSPASTCRVCDLLDTLVNHSDAPVAFFEDYALLCYYCLNAPRAWISSLITGMDFLHILIKYFPMAGGLDSLFMPSRILAIDIQLHFYICRCFLPVSSSDMIRNANLGYYKLEFLKSILTGQSPANFCFKSMWPRTTPTFLTLPGPRTCKDSQDVPGDVGRGLYTALCCHLPTRNRVQHPFLRAEKGGLSPEITTKADYCGLLLGTWQGTDLLGGPGHHAIGLNAEYSGDELAELALAITRPEAGDHSQGPCLLAPMFGLRHKNASRTICPLCESLGAHPDAKDTLDRFKSLILDSFGNNIKILDRIVFLIKTQNTLLDVPCPRLRAWLQMCTPQDFHKHLFCDPLCAINHSITNPSVLFGQIYPPSFQAFKAALAAGQNLEQGVCDSLITLVYIFKSTQVARVGKTILVDVTKELDVVLRIHGLDLVQSYQTSQVYV</sequence>
<keyword id="KW-0002">3D-structure</keyword>
<keyword id="KW-1035">Host cytoplasm</keyword>
<keyword id="KW-1048">Host nucleus</keyword>
<keyword id="KW-0479">Metal-binding</keyword>
<keyword id="KW-1185">Reference proteome</keyword>
<keyword id="KW-0862">Zinc</keyword>
<keyword id="KW-0863">Zinc-finger</keyword>
<protein>
    <recommendedName>
        <fullName>Packaging protein UL32 homolog</fullName>
    </recommendedName>
</protein>